<gene>
    <name type="ordered locus">XCV4380</name>
</gene>
<sequence>MTETSPPPVLDTAQARVLGCLIEKEATTPDAYPLTVNAAQVAANQKTAREPVLNLQTGVVHHALRQLETLGLVRQQFSSRAERYEHRLGSVLDLTRQQVALIGLLLLRGPQTLGELYARSERLARFNDADDVRHHLERLIQRGLAAQLPRASGQREDRYMHLLSGELDVEALQAAAARAAPSAPSGSDSSDLDARMQALEATVVELQEALAAVQARLEAAGA</sequence>
<dbReference type="EMBL" id="AM039952">
    <property type="protein sequence ID" value="CAJ26111.1"/>
    <property type="molecule type" value="Genomic_DNA"/>
</dbReference>
<dbReference type="RefSeq" id="WP_011349127.1">
    <property type="nucleotide sequence ID" value="NZ_CP017190.1"/>
</dbReference>
<dbReference type="SMR" id="Q3BMA2"/>
<dbReference type="STRING" id="456327.BJD11_23505"/>
<dbReference type="KEGG" id="xcv:XCV4380"/>
<dbReference type="eggNOG" id="COG3132">
    <property type="taxonomic scope" value="Bacteria"/>
</dbReference>
<dbReference type="HOGENOM" id="CLU_057831_2_0_6"/>
<dbReference type="Proteomes" id="UP000007069">
    <property type="component" value="Chromosome"/>
</dbReference>
<dbReference type="Gene3D" id="1.10.10.10">
    <property type="entry name" value="Winged helix-like DNA-binding domain superfamily/Winged helix DNA-binding domain"/>
    <property type="match status" value="2"/>
</dbReference>
<dbReference type="HAMAP" id="MF_01584">
    <property type="entry name" value="UPF0502"/>
    <property type="match status" value="1"/>
</dbReference>
<dbReference type="InterPro" id="IPR007432">
    <property type="entry name" value="DUF480"/>
</dbReference>
<dbReference type="InterPro" id="IPR036388">
    <property type="entry name" value="WH-like_DNA-bd_sf"/>
</dbReference>
<dbReference type="InterPro" id="IPR036390">
    <property type="entry name" value="WH_DNA-bd_sf"/>
</dbReference>
<dbReference type="PANTHER" id="PTHR38768">
    <property type="entry name" value="UPF0502 PROTEIN YCEH"/>
    <property type="match status" value="1"/>
</dbReference>
<dbReference type="PANTHER" id="PTHR38768:SF1">
    <property type="entry name" value="UPF0502 PROTEIN YCEH"/>
    <property type="match status" value="1"/>
</dbReference>
<dbReference type="Pfam" id="PF04337">
    <property type="entry name" value="DUF480"/>
    <property type="match status" value="1"/>
</dbReference>
<dbReference type="SUPFAM" id="SSF46785">
    <property type="entry name" value="Winged helix' DNA-binding domain"/>
    <property type="match status" value="2"/>
</dbReference>
<organism>
    <name type="scientific">Xanthomonas euvesicatoria pv. vesicatoria (strain 85-10)</name>
    <name type="common">Xanthomonas campestris pv. vesicatoria</name>
    <dbReference type="NCBI Taxonomy" id="316273"/>
    <lineage>
        <taxon>Bacteria</taxon>
        <taxon>Pseudomonadati</taxon>
        <taxon>Pseudomonadota</taxon>
        <taxon>Gammaproteobacteria</taxon>
        <taxon>Lysobacterales</taxon>
        <taxon>Lysobacteraceae</taxon>
        <taxon>Xanthomonas</taxon>
    </lineage>
</organism>
<comment type="similarity">
    <text evidence="1">Belongs to the UPF0502 family.</text>
</comment>
<accession>Q3BMA2</accession>
<reference key="1">
    <citation type="journal article" date="2005" name="J. Bacteriol.">
        <title>Insights into genome plasticity and pathogenicity of the plant pathogenic Bacterium Xanthomonas campestris pv. vesicatoria revealed by the complete genome sequence.</title>
        <authorList>
            <person name="Thieme F."/>
            <person name="Koebnik R."/>
            <person name="Bekel T."/>
            <person name="Berger C."/>
            <person name="Boch J."/>
            <person name="Buettner D."/>
            <person name="Caldana C."/>
            <person name="Gaigalat L."/>
            <person name="Goesmann A."/>
            <person name="Kay S."/>
            <person name="Kirchner O."/>
            <person name="Lanz C."/>
            <person name="Linke B."/>
            <person name="McHardy A.C."/>
            <person name="Meyer F."/>
            <person name="Mittenhuber G."/>
            <person name="Nies D.H."/>
            <person name="Niesbach-Kloesgen U."/>
            <person name="Patschkowski T."/>
            <person name="Rueckert C."/>
            <person name="Rupp O."/>
            <person name="Schneiker S."/>
            <person name="Schuster S.C."/>
            <person name="Vorhoelter F.J."/>
            <person name="Weber E."/>
            <person name="Puehler A."/>
            <person name="Bonas U."/>
            <person name="Bartels D."/>
            <person name="Kaiser O."/>
        </authorList>
    </citation>
    <scope>NUCLEOTIDE SEQUENCE [LARGE SCALE GENOMIC DNA]</scope>
    <source>
        <strain>85-10</strain>
    </source>
</reference>
<protein>
    <recommendedName>
        <fullName evidence="1">UPF0502 protein XCV4380</fullName>
    </recommendedName>
</protein>
<feature type="chain" id="PRO_0000309447" description="UPF0502 protein XCV4380">
    <location>
        <begin position="1"/>
        <end position="222"/>
    </location>
</feature>
<evidence type="ECO:0000255" key="1">
    <source>
        <dbReference type="HAMAP-Rule" id="MF_01584"/>
    </source>
</evidence>
<proteinExistence type="inferred from homology"/>
<name>Y4380_XANE5</name>